<keyword id="KW-0123">Cardiotoxin</keyword>
<keyword id="KW-0204">Cytolysis</keyword>
<keyword id="KW-0903">Direct protein sequencing</keyword>
<keyword id="KW-1015">Disulfide bond</keyword>
<keyword id="KW-0472">Membrane</keyword>
<keyword id="KW-0964">Secreted</keyword>
<keyword id="KW-1052">Target cell membrane</keyword>
<keyword id="KW-1053">Target membrane</keyword>
<keyword id="KW-0800">Toxin</keyword>
<name>3SA5_NAJHA</name>
<dbReference type="PIR" id="A01727">
    <property type="entry name" value="H3NJ5E"/>
</dbReference>
<dbReference type="SMR" id="P01464"/>
<dbReference type="GO" id="GO:0005576">
    <property type="term" value="C:extracellular region"/>
    <property type="evidence" value="ECO:0007669"/>
    <property type="project" value="UniProtKB-SubCell"/>
</dbReference>
<dbReference type="GO" id="GO:0016020">
    <property type="term" value="C:membrane"/>
    <property type="evidence" value="ECO:0007669"/>
    <property type="project" value="UniProtKB-KW"/>
</dbReference>
<dbReference type="GO" id="GO:0044218">
    <property type="term" value="C:other organism cell membrane"/>
    <property type="evidence" value="ECO:0007669"/>
    <property type="project" value="UniProtKB-KW"/>
</dbReference>
<dbReference type="GO" id="GO:0090729">
    <property type="term" value="F:toxin activity"/>
    <property type="evidence" value="ECO:0007669"/>
    <property type="project" value="UniProtKB-KW"/>
</dbReference>
<dbReference type="GO" id="GO:0031640">
    <property type="term" value="P:killing of cells of another organism"/>
    <property type="evidence" value="ECO:0007669"/>
    <property type="project" value="UniProtKB-KW"/>
</dbReference>
<dbReference type="CDD" id="cd00206">
    <property type="entry name" value="TFP_snake_toxin"/>
    <property type="match status" value="1"/>
</dbReference>
<dbReference type="FunFam" id="2.10.60.10:FF:000024">
    <property type="entry name" value="Cytotoxin 1"/>
    <property type="match status" value="1"/>
</dbReference>
<dbReference type="Gene3D" id="2.10.60.10">
    <property type="entry name" value="CD59"/>
    <property type="match status" value="1"/>
</dbReference>
<dbReference type="InterPro" id="IPR003572">
    <property type="entry name" value="Cytotoxin_Cobra"/>
</dbReference>
<dbReference type="InterPro" id="IPR003571">
    <property type="entry name" value="Snake_3FTx"/>
</dbReference>
<dbReference type="InterPro" id="IPR045860">
    <property type="entry name" value="Snake_toxin-like_sf"/>
</dbReference>
<dbReference type="InterPro" id="IPR018354">
    <property type="entry name" value="Snake_toxin_con_site"/>
</dbReference>
<dbReference type="InterPro" id="IPR054131">
    <property type="entry name" value="Toxin_cobra-type"/>
</dbReference>
<dbReference type="Pfam" id="PF21947">
    <property type="entry name" value="Toxin_cobra-type"/>
    <property type="match status" value="1"/>
</dbReference>
<dbReference type="PRINTS" id="PR00282">
    <property type="entry name" value="CYTOTOXIN"/>
</dbReference>
<dbReference type="SUPFAM" id="SSF57302">
    <property type="entry name" value="Snake toxin-like"/>
    <property type="match status" value="1"/>
</dbReference>
<dbReference type="PROSITE" id="PS00272">
    <property type="entry name" value="SNAKE_TOXIN"/>
    <property type="match status" value="1"/>
</dbReference>
<feature type="chain" id="PRO_0000093489" description="Cytotoxin 5" evidence="3">
    <location>
        <begin position="1"/>
        <end position="60"/>
    </location>
</feature>
<feature type="disulfide bond" evidence="1">
    <location>
        <begin position="3"/>
        <end position="21"/>
    </location>
</feature>
<feature type="disulfide bond" evidence="1">
    <location>
        <begin position="14"/>
        <end position="38"/>
    </location>
</feature>
<feature type="disulfide bond" evidence="1">
    <location>
        <begin position="42"/>
        <end position="53"/>
    </location>
</feature>
<feature type="disulfide bond" evidence="1">
    <location>
        <begin position="54"/>
        <end position="59"/>
    </location>
</feature>
<organism>
    <name type="scientific">Naja annulifera</name>
    <name type="common">Banded Egyptian cobra</name>
    <name type="synonym">Naja haje annulifera</name>
    <dbReference type="NCBI Taxonomy" id="96794"/>
    <lineage>
        <taxon>Eukaryota</taxon>
        <taxon>Metazoa</taxon>
        <taxon>Chordata</taxon>
        <taxon>Craniata</taxon>
        <taxon>Vertebrata</taxon>
        <taxon>Euteleostomi</taxon>
        <taxon>Lepidosauria</taxon>
        <taxon>Squamata</taxon>
        <taxon>Bifurcata</taxon>
        <taxon>Unidentata</taxon>
        <taxon>Episquamata</taxon>
        <taxon>Toxicofera</taxon>
        <taxon>Serpentes</taxon>
        <taxon>Colubroidea</taxon>
        <taxon>Elapidae</taxon>
        <taxon>Elapinae</taxon>
        <taxon>Naja</taxon>
    </lineage>
</organism>
<comment type="function">
    <text evidence="1 2">Shows cytolytic activity on many different cells by forming pore in lipid membranes. In vivo, increases heart rate or kills the animal by cardiac arrest. In addition, it binds to heparin with high affinity, interacts with Kv channel-interacting protein 1 (KCNIP1) in a calcium-independent manner, and binds to integrin alpha-V/beta-3 (ITGAV/ITGB3) with moderate affinity.</text>
</comment>
<comment type="subunit">
    <text evidence="1">Monomer in solution; Homodimer and oligomer in the presence of negatively charged lipids forming a pore with a size ranging between 20 and 30 Angstroms.</text>
</comment>
<comment type="subcellular location">
    <subcellularLocation>
        <location evidence="3">Secreted</location>
    </subcellularLocation>
    <subcellularLocation>
        <location evidence="1">Target cell membrane</location>
    </subcellularLocation>
</comment>
<comment type="tissue specificity">
    <text evidence="4">Expressed by the venom gland.</text>
</comment>
<comment type="toxic dose">
    <text evidence="3">LD(50) is 1.82 mg/kg by intravenous injection.</text>
</comment>
<comment type="miscellaneous">
    <text evidence="4">Is classified as a P-type cytotoxin, since a proline residue stands at position 30 (Pro-31 in standard classification).</text>
</comment>
<comment type="similarity">
    <text evidence="4">Belongs to the three-finger toxin family. Short-chain subfamily. Type IA cytotoxin sub-subfamily.</text>
</comment>
<protein>
    <recommendedName>
        <fullName>Cytotoxin 5</fullName>
    </recommendedName>
    <alternativeName>
        <fullName>Toxin CM-6</fullName>
    </alternativeName>
</protein>
<accession>P01464</accession>
<sequence>LKCHKLVPPFWKTCPEGKNLCYKMYMVATPMIPVKRGCIDVCPKNSALVKYMCCNTNKCN</sequence>
<reference key="1">
    <citation type="journal article" date="1977" name="Hoppe-Seyler's Z. Physiol. Chem.">
        <title>Snake venom toxin. The amino acid sequence of three toxins (CM-2h, CM-4b and CM-6) from Naja haje annulifera (Egyptian cobra) venom.</title>
        <authorList>
            <person name="Joubert F.J."/>
        </authorList>
    </citation>
    <scope>PROTEIN SEQUENCE</scope>
    <scope>SUBCELLULAR LOCATION</scope>
    <scope>TOXIC DOSE</scope>
    <source>
        <tissue>Venom</tissue>
    </source>
</reference>
<proteinExistence type="evidence at protein level"/>
<evidence type="ECO:0000250" key="1">
    <source>
        <dbReference type="UniProtKB" id="P60301"/>
    </source>
</evidence>
<evidence type="ECO:0000250" key="2">
    <source>
        <dbReference type="UniProtKB" id="P60304"/>
    </source>
</evidence>
<evidence type="ECO:0000269" key="3">
    <source>
    </source>
</evidence>
<evidence type="ECO:0000305" key="4"/>